<protein>
    <recommendedName>
        <fullName evidence="1">Large ribosomal subunit protein bL32</fullName>
    </recommendedName>
    <alternativeName>
        <fullName evidence="3">50S ribosomal protein L32</fullName>
    </alternativeName>
</protein>
<organism>
    <name type="scientific">Aliarcobacter butzleri (strain RM4018)</name>
    <name type="common">Arcobacter butzleri</name>
    <dbReference type="NCBI Taxonomy" id="367737"/>
    <lineage>
        <taxon>Bacteria</taxon>
        <taxon>Pseudomonadati</taxon>
        <taxon>Campylobacterota</taxon>
        <taxon>Epsilonproteobacteria</taxon>
        <taxon>Campylobacterales</taxon>
        <taxon>Arcobacteraceae</taxon>
        <taxon>Aliarcobacter</taxon>
    </lineage>
</organism>
<dbReference type="EMBL" id="CP000361">
    <property type="protein sequence ID" value="ABV66568.1"/>
    <property type="molecule type" value="Genomic_DNA"/>
</dbReference>
<dbReference type="RefSeq" id="WP_004510349.1">
    <property type="nucleotide sequence ID" value="NC_009850.1"/>
</dbReference>
<dbReference type="SMR" id="A8ERJ4"/>
<dbReference type="STRING" id="367737.Abu_0293"/>
<dbReference type="GeneID" id="24303754"/>
<dbReference type="KEGG" id="abu:Abu_0293"/>
<dbReference type="eggNOG" id="COG0333">
    <property type="taxonomic scope" value="Bacteria"/>
</dbReference>
<dbReference type="HOGENOM" id="CLU_129084_1_2_7"/>
<dbReference type="Proteomes" id="UP000001136">
    <property type="component" value="Chromosome"/>
</dbReference>
<dbReference type="GO" id="GO:0015934">
    <property type="term" value="C:large ribosomal subunit"/>
    <property type="evidence" value="ECO:0007669"/>
    <property type="project" value="InterPro"/>
</dbReference>
<dbReference type="GO" id="GO:0003735">
    <property type="term" value="F:structural constituent of ribosome"/>
    <property type="evidence" value="ECO:0007669"/>
    <property type="project" value="InterPro"/>
</dbReference>
<dbReference type="GO" id="GO:0006412">
    <property type="term" value="P:translation"/>
    <property type="evidence" value="ECO:0007669"/>
    <property type="project" value="UniProtKB-UniRule"/>
</dbReference>
<dbReference type="HAMAP" id="MF_00340">
    <property type="entry name" value="Ribosomal_bL32"/>
    <property type="match status" value="1"/>
</dbReference>
<dbReference type="InterPro" id="IPR002677">
    <property type="entry name" value="Ribosomal_bL32"/>
</dbReference>
<dbReference type="InterPro" id="IPR044957">
    <property type="entry name" value="Ribosomal_bL32_bact"/>
</dbReference>
<dbReference type="InterPro" id="IPR011332">
    <property type="entry name" value="Ribosomal_zn-bd"/>
</dbReference>
<dbReference type="NCBIfam" id="TIGR01031">
    <property type="entry name" value="rpmF_bact"/>
    <property type="match status" value="1"/>
</dbReference>
<dbReference type="PANTHER" id="PTHR35534">
    <property type="entry name" value="50S RIBOSOMAL PROTEIN L32"/>
    <property type="match status" value="1"/>
</dbReference>
<dbReference type="PANTHER" id="PTHR35534:SF1">
    <property type="entry name" value="LARGE RIBOSOMAL SUBUNIT PROTEIN BL32"/>
    <property type="match status" value="1"/>
</dbReference>
<dbReference type="Pfam" id="PF01783">
    <property type="entry name" value="Ribosomal_L32p"/>
    <property type="match status" value="1"/>
</dbReference>
<dbReference type="SUPFAM" id="SSF57829">
    <property type="entry name" value="Zn-binding ribosomal proteins"/>
    <property type="match status" value="1"/>
</dbReference>
<keyword id="KW-1185">Reference proteome</keyword>
<keyword id="KW-0687">Ribonucleoprotein</keyword>
<keyword id="KW-0689">Ribosomal protein</keyword>
<comment type="similarity">
    <text evidence="1">Belongs to the bacterial ribosomal protein bL32 family.</text>
</comment>
<name>RL32_ALIB4</name>
<gene>
    <name evidence="1" type="primary">rpmF</name>
    <name type="ordered locus">Abu_0293</name>
</gene>
<proteinExistence type="inferred from homology"/>
<reference key="1">
    <citation type="journal article" date="2007" name="PLoS ONE">
        <title>The complete genome sequence and analysis of the Epsilonproteobacterium Arcobacter butzleri.</title>
        <authorList>
            <person name="Miller W.G."/>
            <person name="Parker C.T."/>
            <person name="Rubenfield M."/>
            <person name="Mendz G.L."/>
            <person name="Woesten M.M.S.M."/>
            <person name="Ussery D.W."/>
            <person name="Stolz J.F."/>
            <person name="Binnewies T.T."/>
            <person name="Hallin P.F."/>
            <person name="Wang G."/>
            <person name="Malek J.A."/>
            <person name="Rogosin A."/>
            <person name="Stanker L.H."/>
            <person name="Mandrell R.E."/>
        </authorList>
    </citation>
    <scope>NUCLEOTIDE SEQUENCE [LARGE SCALE GENOMIC DNA]</scope>
    <source>
        <strain>RM4018</strain>
    </source>
</reference>
<accession>A8ERJ4</accession>
<evidence type="ECO:0000255" key="1">
    <source>
        <dbReference type="HAMAP-Rule" id="MF_00340"/>
    </source>
</evidence>
<evidence type="ECO:0000256" key="2">
    <source>
        <dbReference type="SAM" id="MobiDB-lite"/>
    </source>
</evidence>
<evidence type="ECO:0000305" key="3"/>
<sequence>MAVPKRRVSHTRSAKRRTHYKITLKKPVKDSDGSWKMPHMVNPNTGEYKN</sequence>
<feature type="chain" id="PRO_1000059817" description="Large ribosomal subunit protein bL32">
    <location>
        <begin position="1"/>
        <end position="50"/>
    </location>
</feature>
<feature type="region of interest" description="Disordered" evidence="2">
    <location>
        <begin position="1"/>
        <end position="50"/>
    </location>
</feature>
<feature type="compositionally biased region" description="Basic residues" evidence="2">
    <location>
        <begin position="1"/>
        <end position="26"/>
    </location>
</feature>